<comment type="function">
    <text evidence="1">The UvrABC repair system catalyzes the recognition and processing of DNA lesions. UvrC both incises the 5' and 3' sides of the lesion. The N-terminal half is responsible for the 3' incision and the C-terminal half is responsible for the 5' incision.</text>
</comment>
<comment type="subunit">
    <text evidence="1">Interacts with UvrB in an incision complex.</text>
</comment>
<comment type="subcellular location">
    <subcellularLocation>
        <location evidence="1">Cytoplasm</location>
    </subcellularLocation>
</comment>
<comment type="similarity">
    <text evidence="1">Belongs to the UvrC family.</text>
</comment>
<dbReference type="EMBL" id="CP000548">
    <property type="protein sequence ID" value="ABO04826.1"/>
    <property type="molecule type" value="Genomic_DNA"/>
</dbReference>
<dbReference type="RefSeq" id="WP_004192853.1">
    <property type="nucleotide sequence ID" value="NZ_CP007802.1"/>
</dbReference>
<dbReference type="SMR" id="A3MM33"/>
<dbReference type="GeneID" id="92978320"/>
<dbReference type="KEGG" id="bmaz:BM44_1419"/>
<dbReference type="KEGG" id="bmn:BMA10247_1779"/>
<dbReference type="PATRIC" id="fig|320389.8.peg.1580"/>
<dbReference type="GO" id="GO:0005737">
    <property type="term" value="C:cytoplasm"/>
    <property type="evidence" value="ECO:0007669"/>
    <property type="project" value="UniProtKB-SubCell"/>
</dbReference>
<dbReference type="GO" id="GO:0009380">
    <property type="term" value="C:excinuclease repair complex"/>
    <property type="evidence" value="ECO:0007669"/>
    <property type="project" value="InterPro"/>
</dbReference>
<dbReference type="GO" id="GO:0003677">
    <property type="term" value="F:DNA binding"/>
    <property type="evidence" value="ECO:0007669"/>
    <property type="project" value="UniProtKB-UniRule"/>
</dbReference>
<dbReference type="GO" id="GO:0009381">
    <property type="term" value="F:excinuclease ABC activity"/>
    <property type="evidence" value="ECO:0007669"/>
    <property type="project" value="UniProtKB-UniRule"/>
</dbReference>
<dbReference type="GO" id="GO:0006289">
    <property type="term" value="P:nucleotide-excision repair"/>
    <property type="evidence" value="ECO:0007669"/>
    <property type="project" value="UniProtKB-UniRule"/>
</dbReference>
<dbReference type="GO" id="GO:0009432">
    <property type="term" value="P:SOS response"/>
    <property type="evidence" value="ECO:0007669"/>
    <property type="project" value="UniProtKB-UniRule"/>
</dbReference>
<dbReference type="CDD" id="cd10434">
    <property type="entry name" value="GIY-YIG_UvrC_Cho"/>
    <property type="match status" value="1"/>
</dbReference>
<dbReference type="FunFam" id="3.30.420.340:FF:000001">
    <property type="entry name" value="UvrABC system protein C"/>
    <property type="match status" value="1"/>
</dbReference>
<dbReference type="FunFam" id="3.40.1440.10:FF:000001">
    <property type="entry name" value="UvrABC system protein C"/>
    <property type="match status" value="1"/>
</dbReference>
<dbReference type="Gene3D" id="1.10.150.20">
    <property type="entry name" value="5' to 3' exonuclease, C-terminal subdomain"/>
    <property type="match status" value="1"/>
</dbReference>
<dbReference type="Gene3D" id="3.40.1440.10">
    <property type="entry name" value="GIY-YIG endonuclease"/>
    <property type="match status" value="1"/>
</dbReference>
<dbReference type="Gene3D" id="4.10.860.10">
    <property type="entry name" value="UVR domain"/>
    <property type="match status" value="1"/>
</dbReference>
<dbReference type="Gene3D" id="3.30.420.340">
    <property type="entry name" value="UvrC, RNAse H endonuclease domain"/>
    <property type="match status" value="1"/>
</dbReference>
<dbReference type="HAMAP" id="MF_00203">
    <property type="entry name" value="UvrC"/>
    <property type="match status" value="1"/>
</dbReference>
<dbReference type="InterPro" id="IPR000305">
    <property type="entry name" value="GIY-YIG_endonuc"/>
</dbReference>
<dbReference type="InterPro" id="IPR035901">
    <property type="entry name" value="GIY-YIG_endonuc_sf"/>
</dbReference>
<dbReference type="InterPro" id="IPR047296">
    <property type="entry name" value="GIY-YIG_UvrC_Cho"/>
</dbReference>
<dbReference type="InterPro" id="IPR003583">
    <property type="entry name" value="Hlx-hairpin-Hlx_DNA-bd_motif"/>
</dbReference>
<dbReference type="InterPro" id="IPR010994">
    <property type="entry name" value="RuvA_2-like"/>
</dbReference>
<dbReference type="InterPro" id="IPR001943">
    <property type="entry name" value="UVR_dom"/>
</dbReference>
<dbReference type="InterPro" id="IPR036876">
    <property type="entry name" value="UVR_dom_sf"/>
</dbReference>
<dbReference type="InterPro" id="IPR050066">
    <property type="entry name" value="UvrABC_protein_C"/>
</dbReference>
<dbReference type="InterPro" id="IPR004791">
    <property type="entry name" value="UvrC"/>
</dbReference>
<dbReference type="InterPro" id="IPR001162">
    <property type="entry name" value="UvrC_RNase_H_dom"/>
</dbReference>
<dbReference type="InterPro" id="IPR038476">
    <property type="entry name" value="UvrC_RNase_H_dom_sf"/>
</dbReference>
<dbReference type="NCBIfam" id="NF001824">
    <property type="entry name" value="PRK00558.1-5"/>
    <property type="match status" value="1"/>
</dbReference>
<dbReference type="NCBIfam" id="TIGR00194">
    <property type="entry name" value="uvrC"/>
    <property type="match status" value="1"/>
</dbReference>
<dbReference type="PANTHER" id="PTHR30562:SF1">
    <property type="entry name" value="UVRABC SYSTEM PROTEIN C"/>
    <property type="match status" value="1"/>
</dbReference>
<dbReference type="PANTHER" id="PTHR30562">
    <property type="entry name" value="UVRC/OXIDOREDUCTASE"/>
    <property type="match status" value="1"/>
</dbReference>
<dbReference type="Pfam" id="PF01541">
    <property type="entry name" value="GIY-YIG"/>
    <property type="match status" value="1"/>
</dbReference>
<dbReference type="Pfam" id="PF14520">
    <property type="entry name" value="HHH_5"/>
    <property type="match status" value="1"/>
</dbReference>
<dbReference type="Pfam" id="PF02151">
    <property type="entry name" value="UVR"/>
    <property type="match status" value="1"/>
</dbReference>
<dbReference type="Pfam" id="PF22920">
    <property type="entry name" value="UvrC_RNaseH"/>
    <property type="match status" value="2"/>
</dbReference>
<dbReference type="Pfam" id="PF08459">
    <property type="entry name" value="UvrC_RNaseH_dom"/>
    <property type="match status" value="1"/>
</dbReference>
<dbReference type="SMART" id="SM00465">
    <property type="entry name" value="GIYc"/>
    <property type="match status" value="1"/>
</dbReference>
<dbReference type="SMART" id="SM00278">
    <property type="entry name" value="HhH1"/>
    <property type="match status" value="2"/>
</dbReference>
<dbReference type="SUPFAM" id="SSF46600">
    <property type="entry name" value="C-terminal UvrC-binding domain of UvrB"/>
    <property type="match status" value="1"/>
</dbReference>
<dbReference type="SUPFAM" id="SSF82771">
    <property type="entry name" value="GIY-YIG endonuclease"/>
    <property type="match status" value="1"/>
</dbReference>
<dbReference type="SUPFAM" id="SSF47781">
    <property type="entry name" value="RuvA domain 2-like"/>
    <property type="match status" value="1"/>
</dbReference>
<dbReference type="PROSITE" id="PS50164">
    <property type="entry name" value="GIY_YIG"/>
    <property type="match status" value="1"/>
</dbReference>
<dbReference type="PROSITE" id="PS50151">
    <property type="entry name" value="UVR"/>
    <property type="match status" value="1"/>
</dbReference>
<dbReference type="PROSITE" id="PS50165">
    <property type="entry name" value="UVRC"/>
    <property type="match status" value="1"/>
</dbReference>
<name>UVRC_BURM7</name>
<feature type="chain" id="PRO_1000077759" description="UvrABC system protein C">
    <location>
        <begin position="1"/>
        <end position="747"/>
    </location>
</feature>
<feature type="domain" description="GIY-YIG" evidence="1">
    <location>
        <begin position="22"/>
        <end position="100"/>
    </location>
</feature>
<feature type="domain" description="UVR" evidence="1">
    <location>
        <begin position="209"/>
        <end position="244"/>
    </location>
</feature>
<feature type="region of interest" description="Disordered" evidence="2">
    <location>
        <begin position="363"/>
        <end position="400"/>
    </location>
</feature>
<feature type="compositionally biased region" description="Basic and acidic residues" evidence="2">
    <location>
        <begin position="370"/>
        <end position="387"/>
    </location>
</feature>
<feature type="compositionally biased region" description="Low complexity" evidence="2">
    <location>
        <begin position="388"/>
        <end position="400"/>
    </location>
</feature>
<reference key="1">
    <citation type="journal article" date="2010" name="Genome Biol. Evol.">
        <title>Continuing evolution of Burkholderia mallei through genome reduction and large-scale rearrangements.</title>
        <authorList>
            <person name="Losada L."/>
            <person name="Ronning C.M."/>
            <person name="DeShazer D."/>
            <person name="Woods D."/>
            <person name="Fedorova N."/>
            <person name="Kim H.S."/>
            <person name="Shabalina S.A."/>
            <person name="Pearson T.R."/>
            <person name="Brinkac L."/>
            <person name="Tan P."/>
            <person name="Nandi T."/>
            <person name="Crabtree J."/>
            <person name="Badger J."/>
            <person name="Beckstrom-Sternberg S."/>
            <person name="Saqib M."/>
            <person name="Schutzer S.E."/>
            <person name="Keim P."/>
            <person name="Nierman W.C."/>
        </authorList>
    </citation>
    <scope>NUCLEOTIDE SEQUENCE [LARGE SCALE GENOMIC DNA]</scope>
    <source>
        <strain>NCTC 10247</strain>
    </source>
</reference>
<evidence type="ECO:0000255" key="1">
    <source>
        <dbReference type="HAMAP-Rule" id="MF_00203"/>
    </source>
</evidence>
<evidence type="ECO:0000256" key="2">
    <source>
        <dbReference type="SAM" id="MobiDB-lite"/>
    </source>
</evidence>
<protein>
    <recommendedName>
        <fullName evidence="1">UvrABC system protein C</fullName>
        <shortName evidence="1">Protein UvrC</shortName>
    </recommendedName>
    <alternativeName>
        <fullName evidence="1">Excinuclease ABC subunit C</fullName>
    </alternativeName>
</protein>
<keyword id="KW-0963">Cytoplasm</keyword>
<keyword id="KW-0227">DNA damage</keyword>
<keyword id="KW-0228">DNA excision</keyword>
<keyword id="KW-0234">DNA repair</keyword>
<keyword id="KW-0267">Excision nuclease</keyword>
<keyword id="KW-0742">SOS response</keyword>
<sequence>MTSPDAPESRFEPKPILAQLPHLPGVYRYYDVQDAVLYVGKARDLKKRVSSYFTKTQLSPRIAMMITRIARIETTVTRSEAEALLLENNLIKALAPRYNILFRDDKSYPYLKLTGHRFPRMAYYRGAVDKKNQYFGPFPSAWAVRESIQILQRVFQLRTCEDSVFNNRTRPCLLHQIGRCSAPCVGAIGEEDYARDVDNASRFLLGRQGEVMGELERKMHAFAAELKFEQAAAVRNQMSSLAKVLHQQAIDVGGDSDVDILAVVAQGGRVCVNLAMVRGGRHLGDKAYFPAHVETALALAGDIEALAGEGAGDGVQAAAQPAQAPLATDADATDAAATEAKTVTAAAAARAGARTAQAAGARAAASAEGDVERRAEGETHARADAREAAALPDGAAAAQEADADVDAAPLETEVLEAFIAQHYLGNRVPPVLVVSHAPANRELIDLLVEQAGHKVAVVRQPQGQKRAWLTMAEQNARLALARLLSEQGSQQARTRSLADVLGYESDDLAQLRIECFDISHTMGEATQASCVVYHHHRMQSSEYRRYNIAGITPGDDYAAMRQVLTRRYEKMVEEAAAEASADEAAGIDGNAVHAAASAGRLPNVVLIDGGRGQVEIARQVFSELGLDISMLVGVAKGEGRKVGLETLIFADGRAPLELGKESAALMLVAQIRDEAHRFAITGMRAKRAKTRQTSRLEELEGVGAKRRQRLLARFGGLRGVVAASVDELASVEGISRALAEQIYRQLH</sequence>
<proteinExistence type="inferred from homology"/>
<gene>
    <name evidence="1" type="primary">uvrC</name>
    <name type="ordered locus">BMA10247_1779</name>
</gene>
<accession>A3MM33</accession>
<organism>
    <name type="scientific">Burkholderia mallei (strain NCTC 10247)</name>
    <dbReference type="NCBI Taxonomy" id="320389"/>
    <lineage>
        <taxon>Bacteria</taxon>
        <taxon>Pseudomonadati</taxon>
        <taxon>Pseudomonadota</taxon>
        <taxon>Betaproteobacteria</taxon>
        <taxon>Burkholderiales</taxon>
        <taxon>Burkholderiaceae</taxon>
        <taxon>Burkholderia</taxon>
        <taxon>pseudomallei group</taxon>
    </lineage>
</organism>